<organism>
    <name type="scientific">Piper cenocladum</name>
    <name type="common">Ant piper</name>
    <dbReference type="NCBI Taxonomy" id="398741"/>
    <lineage>
        <taxon>Eukaryota</taxon>
        <taxon>Viridiplantae</taxon>
        <taxon>Streptophyta</taxon>
        <taxon>Embryophyta</taxon>
        <taxon>Tracheophyta</taxon>
        <taxon>Spermatophyta</taxon>
        <taxon>Magnoliopsida</taxon>
        <taxon>Magnoliidae</taxon>
        <taxon>Piperales</taxon>
        <taxon>Piperaceae</taxon>
        <taxon>Piper</taxon>
    </lineage>
</organism>
<name>PSBZ_PIPCE</name>
<accession>Q06GR3</accession>
<sequence>MTIAFQLAVFALIATSLILVIGVPVVFASPDGWSSNKNIVFSGTSLWIGLVFLVGILNSLIS</sequence>
<geneLocation type="chloroplast"/>
<keyword id="KW-0150">Chloroplast</keyword>
<keyword id="KW-0472">Membrane</keyword>
<keyword id="KW-0602">Photosynthesis</keyword>
<keyword id="KW-0604">Photosystem II</keyword>
<keyword id="KW-0934">Plastid</keyword>
<keyword id="KW-0674">Reaction center</keyword>
<keyword id="KW-0793">Thylakoid</keyword>
<keyword id="KW-0812">Transmembrane</keyword>
<keyword id="KW-1133">Transmembrane helix</keyword>
<feature type="chain" id="PRO_0000277230" description="Photosystem II reaction center protein Z">
    <location>
        <begin position="1"/>
        <end position="62"/>
    </location>
</feature>
<feature type="transmembrane region" description="Helical" evidence="1">
    <location>
        <begin position="8"/>
        <end position="28"/>
    </location>
</feature>
<feature type="transmembrane region" description="Helical" evidence="1">
    <location>
        <begin position="41"/>
        <end position="61"/>
    </location>
</feature>
<protein>
    <recommendedName>
        <fullName evidence="1">Photosystem II reaction center protein Z</fullName>
        <shortName evidence="1">PSII-Z</shortName>
    </recommendedName>
</protein>
<evidence type="ECO:0000255" key="1">
    <source>
        <dbReference type="HAMAP-Rule" id="MF_00644"/>
    </source>
</evidence>
<gene>
    <name evidence="1" type="primary">psbZ</name>
</gene>
<reference key="1">
    <citation type="journal article" date="2006" name="BMC Evol. Biol.">
        <title>Complete plastid genome sequences of Drimys, Liriodendron, and Piper: implications for the phylogenetic relationships of magnoliids.</title>
        <authorList>
            <person name="Cai Z."/>
            <person name="Penaflor C."/>
            <person name="Kuehl J.V."/>
            <person name="Leebens-Mack J."/>
            <person name="Carlson J.E."/>
            <person name="dePamphilis C.W."/>
            <person name="Boore J.L."/>
            <person name="Jansen R.K."/>
        </authorList>
    </citation>
    <scope>NUCLEOTIDE SEQUENCE [LARGE SCALE GENOMIC DNA]</scope>
</reference>
<comment type="function">
    <text evidence="1">May control the interaction of photosystem II (PSII) cores with the light-harvesting antenna, regulates electron flow through the 2 photosystem reaction centers. PSII is a light-driven water plastoquinone oxidoreductase, using light energy to abstract electrons from H(2)O, generating a proton gradient subsequently used for ATP formation.</text>
</comment>
<comment type="subunit">
    <text evidence="1">PSII is composed of 1 copy each of membrane proteins PsbA, PsbB, PsbC, PsbD, PsbE, PsbF, PsbH, PsbI, PsbJ, PsbK, PsbL, PsbM, PsbT, PsbY, PsbZ, Psb30/Ycf12, at least 3 peripheral proteins of the oxygen-evolving complex and a large number of cofactors. It forms dimeric complexes.</text>
</comment>
<comment type="subcellular location">
    <subcellularLocation>
        <location evidence="1">Plastid</location>
        <location evidence="1">Chloroplast thylakoid membrane</location>
        <topology evidence="1">Multi-pass membrane protein</topology>
    </subcellularLocation>
</comment>
<comment type="similarity">
    <text evidence="1">Belongs to the PsbZ family.</text>
</comment>
<dbReference type="EMBL" id="DQ887677">
    <property type="protein sequence ID" value="ABI14469.1"/>
    <property type="molecule type" value="Genomic_DNA"/>
</dbReference>
<dbReference type="RefSeq" id="YP_784470.1">
    <property type="nucleotide sequence ID" value="NC_008457.1"/>
</dbReference>
<dbReference type="SMR" id="Q06GR3"/>
<dbReference type="GeneID" id="4363731"/>
<dbReference type="GO" id="GO:0009535">
    <property type="term" value="C:chloroplast thylakoid membrane"/>
    <property type="evidence" value="ECO:0007669"/>
    <property type="project" value="UniProtKB-SubCell"/>
</dbReference>
<dbReference type="GO" id="GO:0009539">
    <property type="term" value="C:photosystem II reaction center"/>
    <property type="evidence" value="ECO:0007669"/>
    <property type="project" value="InterPro"/>
</dbReference>
<dbReference type="GO" id="GO:0015979">
    <property type="term" value="P:photosynthesis"/>
    <property type="evidence" value="ECO:0007669"/>
    <property type="project" value="UniProtKB-UniRule"/>
</dbReference>
<dbReference type="GO" id="GO:0042549">
    <property type="term" value="P:photosystem II stabilization"/>
    <property type="evidence" value="ECO:0007669"/>
    <property type="project" value="InterPro"/>
</dbReference>
<dbReference type="FunFam" id="1.10.287.740:FF:000001">
    <property type="entry name" value="Photosystem II reaction center protein Z"/>
    <property type="match status" value="1"/>
</dbReference>
<dbReference type="Gene3D" id="1.10.287.740">
    <property type="entry name" value="Photosystem II PsbZ, reaction centre"/>
    <property type="match status" value="1"/>
</dbReference>
<dbReference type="HAMAP" id="MF_00644">
    <property type="entry name" value="PSII_PsbZ"/>
    <property type="match status" value="1"/>
</dbReference>
<dbReference type="InterPro" id="IPR002644">
    <property type="entry name" value="PSII_PsbZ"/>
</dbReference>
<dbReference type="InterPro" id="IPR036512">
    <property type="entry name" value="PSII_PsbZ_sf"/>
</dbReference>
<dbReference type="NCBIfam" id="TIGR03043">
    <property type="entry name" value="PS_II_psbZ"/>
    <property type="match status" value="1"/>
</dbReference>
<dbReference type="PANTHER" id="PTHR34971">
    <property type="entry name" value="PHOTOSYSTEM II REACTION CENTER PROTEIN Z"/>
    <property type="match status" value="1"/>
</dbReference>
<dbReference type="PANTHER" id="PTHR34971:SF2">
    <property type="entry name" value="PHOTOSYSTEM II REACTION CENTER PROTEIN Z"/>
    <property type="match status" value="1"/>
</dbReference>
<dbReference type="Pfam" id="PF01737">
    <property type="entry name" value="Ycf9"/>
    <property type="match status" value="1"/>
</dbReference>
<dbReference type="SUPFAM" id="SSF161055">
    <property type="entry name" value="PsbZ-like"/>
    <property type="match status" value="1"/>
</dbReference>
<proteinExistence type="inferred from homology"/>